<sequence>MSPQTETKASVGFKAGVKDYKLTYYTPEYETKDTDILAAFRVTPQLGVPPEEAGAAVAAESSTGTWTTVWTDGLTSLDRYKGRCYHIEPVPGDPDQYICYVAYPLDLFEEGSVTNMFTSIVGNVFGFKALRALRLEDLRIPPAYVKTFQGPPHGIQVERDKLNKYGRPLLGCTIKPKLGLSAKNYGRACYECLRGGLDFTKDDENVNSQPFMRWRDRFVFCAEAIYKAQAETGEIKGHYLNATAGTCEEMIKRAVFAKELGVPIVMHDYLTGGFTANTTLSHYCRDNGLLLHIHRAMHAVIDRQKNHGMHFRVLAKALRMSGGDHIHSGTVVGKLEGEREITLGFVDLLRDDFIEKDRSRGIFFTQDWVSMPGVIPVASGGIHVWHMPALTEIFGDDSVLQFGGGTLGHPWGNAPGAAANRVALEACVQARNEGRDLAREGNEIIKAACKWSAELAAACEIWKEIKFDTFKAMDTL</sequence>
<keyword id="KW-0007">Acetylation</keyword>
<keyword id="KW-0113">Calvin cycle</keyword>
<keyword id="KW-0120">Carbon dioxide fixation</keyword>
<keyword id="KW-0150">Chloroplast</keyword>
<keyword id="KW-1015">Disulfide bond</keyword>
<keyword id="KW-0456">Lyase</keyword>
<keyword id="KW-0460">Magnesium</keyword>
<keyword id="KW-0479">Metal-binding</keyword>
<keyword id="KW-0488">Methylation</keyword>
<keyword id="KW-0503">Monooxygenase</keyword>
<keyword id="KW-0560">Oxidoreductase</keyword>
<keyword id="KW-0601">Photorespiration</keyword>
<keyword id="KW-0602">Photosynthesis</keyword>
<keyword id="KW-0934">Plastid</keyword>
<geneLocation type="chloroplast"/>
<organism>
    <name type="scientific">Saccharum officinarum</name>
    <name type="common">Sugarcane</name>
    <dbReference type="NCBI Taxonomy" id="4547"/>
    <lineage>
        <taxon>Eukaryota</taxon>
        <taxon>Viridiplantae</taxon>
        <taxon>Streptophyta</taxon>
        <taxon>Embryophyta</taxon>
        <taxon>Tracheophyta</taxon>
        <taxon>Spermatophyta</taxon>
        <taxon>Magnoliopsida</taxon>
        <taxon>Liliopsida</taxon>
        <taxon>Poales</taxon>
        <taxon>Poaceae</taxon>
        <taxon>PACMAD clade</taxon>
        <taxon>Panicoideae</taxon>
        <taxon>Andropogonodae</taxon>
        <taxon>Andropogoneae</taxon>
        <taxon>Saccharinae</taxon>
        <taxon>Saccharum</taxon>
        <taxon>Saccharum officinarum species complex</taxon>
    </lineage>
</organism>
<accession>Q6ENV5</accession>
<evidence type="ECO:0000255" key="1">
    <source>
        <dbReference type="HAMAP-Rule" id="MF_01338"/>
    </source>
</evidence>
<dbReference type="EC" id="4.1.1.39" evidence="1"/>
<dbReference type="EMBL" id="AP006714">
    <property type="protein sequence ID" value="BAD27301.1"/>
    <property type="molecule type" value="Genomic_DNA"/>
</dbReference>
<dbReference type="SMR" id="Q6ENV5"/>
<dbReference type="GO" id="GO:0009507">
    <property type="term" value="C:chloroplast"/>
    <property type="evidence" value="ECO:0007669"/>
    <property type="project" value="UniProtKB-SubCell"/>
</dbReference>
<dbReference type="GO" id="GO:0000287">
    <property type="term" value="F:magnesium ion binding"/>
    <property type="evidence" value="ECO:0007669"/>
    <property type="project" value="UniProtKB-UniRule"/>
</dbReference>
<dbReference type="GO" id="GO:0004497">
    <property type="term" value="F:monooxygenase activity"/>
    <property type="evidence" value="ECO:0007669"/>
    <property type="project" value="UniProtKB-KW"/>
</dbReference>
<dbReference type="GO" id="GO:0016984">
    <property type="term" value="F:ribulose-bisphosphate carboxylase activity"/>
    <property type="evidence" value="ECO:0007669"/>
    <property type="project" value="UniProtKB-UniRule"/>
</dbReference>
<dbReference type="GO" id="GO:0009853">
    <property type="term" value="P:photorespiration"/>
    <property type="evidence" value="ECO:0007669"/>
    <property type="project" value="UniProtKB-KW"/>
</dbReference>
<dbReference type="GO" id="GO:0019253">
    <property type="term" value="P:reductive pentose-phosphate cycle"/>
    <property type="evidence" value="ECO:0007669"/>
    <property type="project" value="UniProtKB-UniRule"/>
</dbReference>
<dbReference type="CDD" id="cd08212">
    <property type="entry name" value="RuBisCO_large_I"/>
    <property type="match status" value="1"/>
</dbReference>
<dbReference type="FunFam" id="3.20.20.110:FF:000001">
    <property type="entry name" value="Ribulose bisphosphate carboxylase large chain"/>
    <property type="match status" value="1"/>
</dbReference>
<dbReference type="FunFam" id="3.30.70.150:FF:000001">
    <property type="entry name" value="Ribulose bisphosphate carboxylase large chain"/>
    <property type="match status" value="1"/>
</dbReference>
<dbReference type="Gene3D" id="3.20.20.110">
    <property type="entry name" value="Ribulose bisphosphate carboxylase, large subunit, C-terminal domain"/>
    <property type="match status" value="1"/>
</dbReference>
<dbReference type="Gene3D" id="3.30.70.150">
    <property type="entry name" value="RuBisCO large subunit, N-terminal domain"/>
    <property type="match status" value="1"/>
</dbReference>
<dbReference type="HAMAP" id="MF_01338">
    <property type="entry name" value="RuBisCO_L_type1"/>
    <property type="match status" value="1"/>
</dbReference>
<dbReference type="InterPro" id="IPR033966">
    <property type="entry name" value="RuBisCO"/>
</dbReference>
<dbReference type="InterPro" id="IPR020878">
    <property type="entry name" value="RuBisCo_large_chain_AS"/>
</dbReference>
<dbReference type="InterPro" id="IPR000685">
    <property type="entry name" value="RuBisCO_lsu_C"/>
</dbReference>
<dbReference type="InterPro" id="IPR036376">
    <property type="entry name" value="RuBisCO_lsu_C_sf"/>
</dbReference>
<dbReference type="InterPro" id="IPR017443">
    <property type="entry name" value="RuBisCO_lsu_fd_N"/>
</dbReference>
<dbReference type="InterPro" id="IPR036422">
    <property type="entry name" value="RuBisCO_lsu_N_sf"/>
</dbReference>
<dbReference type="InterPro" id="IPR020888">
    <property type="entry name" value="RuBisCO_lsuI"/>
</dbReference>
<dbReference type="NCBIfam" id="NF003252">
    <property type="entry name" value="PRK04208.1"/>
    <property type="match status" value="1"/>
</dbReference>
<dbReference type="PANTHER" id="PTHR42704">
    <property type="entry name" value="RIBULOSE BISPHOSPHATE CARBOXYLASE"/>
    <property type="match status" value="1"/>
</dbReference>
<dbReference type="PANTHER" id="PTHR42704:SF20">
    <property type="entry name" value="RIBULOSE BISPHOSPHATE CARBOXYLASE LARGE CHAIN"/>
    <property type="match status" value="1"/>
</dbReference>
<dbReference type="Pfam" id="PF00016">
    <property type="entry name" value="RuBisCO_large"/>
    <property type="match status" value="1"/>
</dbReference>
<dbReference type="Pfam" id="PF02788">
    <property type="entry name" value="RuBisCO_large_N"/>
    <property type="match status" value="1"/>
</dbReference>
<dbReference type="SFLD" id="SFLDG01052">
    <property type="entry name" value="RuBisCO"/>
    <property type="match status" value="1"/>
</dbReference>
<dbReference type="SFLD" id="SFLDS00014">
    <property type="entry name" value="RuBisCO"/>
    <property type="match status" value="1"/>
</dbReference>
<dbReference type="SFLD" id="SFLDG00301">
    <property type="entry name" value="RuBisCO-like_proteins"/>
    <property type="match status" value="1"/>
</dbReference>
<dbReference type="SUPFAM" id="SSF51649">
    <property type="entry name" value="RuBisCo, C-terminal domain"/>
    <property type="match status" value="1"/>
</dbReference>
<dbReference type="SUPFAM" id="SSF54966">
    <property type="entry name" value="RuBisCO, large subunit, small (N-terminal) domain"/>
    <property type="match status" value="1"/>
</dbReference>
<dbReference type="PROSITE" id="PS00157">
    <property type="entry name" value="RUBISCO_LARGE"/>
    <property type="match status" value="1"/>
</dbReference>
<gene>
    <name evidence="1" type="primary">rbcL</name>
</gene>
<name>RBL_SACOF</name>
<feature type="propeptide" id="PRO_0000042919" evidence="1">
    <location>
        <begin position="1"/>
        <end position="2"/>
    </location>
</feature>
<feature type="chain" id="PRO_0000042920" description="Ribulose bisphosphate carboxylase large chain">
    <location>
        <begin position="3"/>
        <end position="476"/>
    </location>
</feature>
<feature type="active site" description="Proton acceptor" evidence="1">
    <location>
        <position position="175"/>
    </location>
</feature>
<feature type="active site" description="Proton acceptor" evidence="1">
    <location>
        <position position="294"/>
    </location>
</feature>
<feature type="binding site" description="in homodimeric partner" evidence="1">
    <location>
        <position position="123"/>
    </location>
    <ligand>
        <name>substrate</name>
    </ligand>
</feature>
<feature type="binding site" evidence="1">
    <location>
        <position position="173"/>
    </location>
    <ligand>
        <name>substrate</name>
    </ligand>
</feature>
<feature type="binding site" evidence="1">
    <location>
        <position position="177"/>
    </location>
    <ligand>
        <name>substrate</name>
    </ligand>
</feature>
<feature type="binding site" description="via carbamate group" evidence="1">
    <location>
        <position position="201"/>
    </location>
    <ligand>
        <name>Mg(2+)</name>
        <dbReference type="ChEBI" id="CHEBI:18420"/>
    </ligand>
</feature>
<feature type="binding site" evidence="1">
    <location>
        <position position="203"/>
    </location>
    <ligand>
        <name>Mg(2+)</name>
        <dbReference type="ChEBI" id="CHEBI:18420"/>
    </ligand>
</feature>
<feature type="binding site" evidence="1">
    <location>
        <position position="204"/>
    </location>
    <ligand>
        <name>Mg(2+)</name>
        <dbReference type="ChEBI" id="CHEBI:18420"/>
    </ligand>
</feature>
<feature type="binding site" evidence="1">
    <location>
        <position position="295"/>
    </location>
    <ligand>
        <name>substrate</name>
    </ligand>
</feature>
<feature type="binding site" evidence="1">
    <location>
        <position position="327"/>
    </location>
    <ligand>
        <name>substrate</name>
    </ligand>
</feature>
<feature type="binding site" evidence="1">
    <location>
        <position position="379"/>
    </location>
    <ligand>
        <name>substrate</name>
    </ligand>
</feature>
<feature type="site" description="Transition state stabilizer" evidence="1">
    <location>
        <position position="334"/>
    </location>
</feature>
<feature type="modified residue" description="N-acetylproline" evidence="1">
    <location>
        <position position="3"/>
    </location>
</feature>
<feature type="modified residue" description="N6,N6,N6-trimethyllysine" evidence="1">
    <location>
        <position position="14"/>
    </location>
</feature>
<feature type="modified residue" description="N6-carboxylysine" evidence="1">
    <location>
        <position position="201"/>
    </location>
</feature>
<feature type="disulfide bond" description="Interchain; in linked form" evidence="1">
    <location>
        <position position="247"/>
    </location>
</feature>
<protein>
    <recommendedName>
        <fullName evidence="1">Ribulose bisphosphate carboxylase large chain</fullName>
        <shortName evidence="1">RuBisCO large subunit</shortName>
        <ecNumber evidence="1">4.1.1.39</ecNumber>
    </recommendedName>
</protein>
<reference key="1">
    <citation type="journal article" date="2004" name="DNA Res.">
        <title>Complete nucleotide sequence of the sugarcane (Saccharum officinarum) chloroplast genome: a comparative analysis of four monocot chloroplast genomes.</title>
        <authorList>
            <person name="Asano T."/>
            <person name="Tsudzuki T."/>
            <person name="Takahashi S."/>
            <person name="Shimada H."/>
            <person name="Kadowaki K."/>
        </authorList>
    </citation>
    <scope>NUCLEOTIDE SEQUENCE [LARGE SCALE GENOMIC DNA]</scope>
</reference>
<comment type="function">
    <text evidence="1">RuBisCO catalyzes two reactions: the carboxylation of D-ribulose 1,5-bisphosphate, the primary event in carbon dioxide fixation, as well as the oxidative fragmentation of the pentose substrate in the photorespiration process. Both reactions occur simultaneously and in competition at the same active site.</text>
</comment>
<comment type="catalytic activity">
    <reaction evidence="1">
        <text>2 (2R)-3-phosphoglycerate + 2 H(+) = D-ribulose 1,5-bisphosphate + CO2 + H2O</text>
        <dbReference type="Rhea" id="RHEA:23124"/>
        <dbReference type="ChEBI" id="CHEBI:15377"/>
        <dbReference type="ChEBI" id="CHEBI:15378"/>
        <dbReference type="ChEBI" id="CHEBI:16526"/>
        <dbReference type="ChEBI" id="CHEBI:57870"/>
        <dbReference type="ChEBI" id="CHEBI:58272"/>
        <dbReference type="EC" id="4.1.1.39"/>
    </reaction>
</comment>
<comment type="catalytic activity">
    <reaction evidence="1">
        <text>D-ribulose 1,5-bisphosphate + O2 = 2-phosphoglycolate + (2R)-3-phosphoglycerate + 2 H(+)</text>
        <dbReference type="Rhea" id="RHEA:36631"/>
        <dbReference type="ChEBI" id="CHEBI:15378"/>
        <dbReference type="ChEBI" id="CHEBI:15379"/>
        <dbReference type="ChEBI" id="CHEBI:57870"/>
        <dbReference type="ChEBI" id="CHEBI:58033"/>
        <dbReference type="ChEBI" id="CHEBI:58272"/>
    </reaction>
</comment>
<comment type="cofactor">
    <cofactor evidence="1">
        <name>Mg(2+)</name>
        <dbReference type="ChEBI" id="CHEBI:18420"/>
    </cofactor>
    <text evidence="1">Binds 1 Mg(2+) ion per subunit.</text>
</comment>
<comment type="subunit">
    <text evidence="1">Heterohexadecamer of 8 large chains and 8 small chains; disulfide-linked. The disulfide link is formed within the large subunit homodimers.</text>
</comment>
<comment type="subcellular location">
    <subcellularLocation>
        <location>Plastid</location>
        <location>Chloroplast</location>
    </subcellularLocation>
</comment>
<comment type="PTM">
    <text evidence="1">The disulfide bond which can form in the large chain dimeric partners within the hexadecamer appears to be associated with oxidative stress and protein turnover.</text>
</comment>
<comment type="miscellaneous">
    <text evidence="1">The basic functional RuBisCO is composed of a large chain homodimer in a 'head-to-tail' conformation. In form I RuBisCO this homodimer is arranged in a barrel-like tetramer with the small subunits forming a tetrameric 'cap' on each end of the 'barrel'.</text>
</comment>
<comment type="similarity">
    <text evidence="1">Belongs to the RuBisCO large chain family. Type I subfamily.</text>
</comment>
<proteinExistence type="inferred from homology"/>